<accession>O22873</accession>
<accession>O23726</accession>
<keyword id="KW-0175">Coiled coil</keyword>
<keyword id="KW-0963">Cytoplasm</keyword>
<keyword id="KW-0238">DNA-binding</keyword>
<keyword id="KW-0539">Nucleus</keyword>
<keyword id="KW-0597">Phosphoprotein</keyword>
<keyword id="KW-1185">Reference proteome</keyword>
<keyword id="KW-0804">Transcription</keyword>
<keyword id="KW-0805">Transcription regulation</keyword>
<proteinExistence type="evidence at protein level"/>
<dbReference type="EMBL" id="Z86093">
    <property type="protein sequence ID" value="CAB06697.1"/>
    <property type="molecule type" value="mRNA"/>
</dbReference>
<dbReference type="EMBL" id="AC002336">
    <property type="protein sequence ID" value="AAB87576.1"/>
    <property type="molecule type" value="Genomic_DNA"/>
</dbReference>
<dbReference type="EMBL" id="CP002685">
    <property type="protein sequence ID" value="AEC09855.1"/>
    <property type="molecule type" value="Genomic_DNA"/>
</dbReference>
<dbReference type="EMBL" id="AY074269">
    <property type="protein sequence ID" value="AAL66966.1"/>
    <property type="molecule type" value="mRNA"/>
</dbReference>
<dbReference type="EMBL" id="AY096746">
    <property type="protein sequence ID" value="AAM20380.1"/>
    <property type="molecule type" value="mRNA"/>
</dbReference>
<dbReference type="PIR" id="G84831">
    <property type="entry name" value="G84831"/>
</dbReference>
<dbReference type="PIR" id="T52624">
    <property type="entry name" value="T52624"/>
</dbReference>
<dbReference type="RefSeq" id="NP_181594.1">
    <property type="nucleotide sequence ID" value="NM_129624.5"/>
</dbReference>
<dbReference type="SMR" id="O22873"/>
<dbReference type="FunCoup" id="O22873">
    <property type="interactions" value="106"/>
</dbReference>
<dbReference type="IntAct" id="O22873">
    <property type="interactions" value="2"/>
</dbReference>
<dbReference type="STRING" id="3702.O22873"/>
<dbReference type="GlyGen" id="O22873">
    <property type="glycosylation" value="1 site"/>
</dbReference>
<dbReference type="iPTMnet" id="O22873"/>
<dbReference type="PaxDb" id="3702-AT2G40620.1"/>
<dbReference type="ProteomicsDB" id="240296"/>
<dbReference type="EnsemblPlants" id="AT2G40620.1">
    <property type="protein sequence ID" value="AT2G40620.1"/>
    <property type="gene ID" value="AT2G40620"/>
</dbReference>
<dbReference type="GeneID" id="818657"/>
<dbReference type="Gramene" id="AT2G40620.1">
    <property type="protein sequence ID" value="AT2G40620.1"/>
    <property type="gene ID" value="AT2G40620"/>
</dbReference>
<dbReference type="KEGG" id="ath:AT2G40620"/>
<dbReference type="Araport" id="AT2G40620"/>
<dbReference type="TAIR" id="AT2G40620">
    <property type="gene designation" value="BZIP18"/>
</dbReference>
<dbReference type="eggNOG" id="ENOG502QQKB">
    <property type="taxonomic scope" value="Eukaryota"/>
</dbReference>
<dbReference type="HOGENOM" id="CLU_026205_1_0_1"/>
<dbReference type="InParanoid" id="O22873"/>
<dbReference type="OMA" id="SEDDMLC"/>
<dbReference type="PhylomeDB" id="O22873"/>
<dbReference type="PRO" id="PR:O22873"/>
<dbReference type="Proteomes" id="UP000006548">
    <property type="component" value="Chromosome 2"/>
</dbReference>
<dbReference type="ExpressionAtlas" id="O22873">
    <property type="expression patterns" value="baseline and differential"/>
</dbReference>
<dbReference type="GO" id="GO:0005737">
    <property type="term" value="C:cytoplasm"/>
    <property type="evidence" value="ECO:0000314"/>
    <property type="project" value="TAIR"/>
</dbReference>
<dbReference type="GO" id="GO:0005654">
    <property type="term" value="C:nucleoplasm"/>
    <property type="evidence" value="ECO:0000314"/>
    <property type="project" value="UniProtKB"/>
</dbReference>
<dbReference type="GO" id="GO:0005634">
    <property type="term" value="C:nucleus"/>
    <property type="evidence" value="ECO:0000314"/>
    <property type="project" value="TAIR"/>
</dbReference>
<dbReference type="GO" id="GO:0048471">
    <property type="term" value="C:perinuclear region of cytoplasm"/>
    <property type="evidence" value="ECO:0000314"/>
    <property type="project" value="UniProtKB"/>
</dbReference>
<dbReference type="GO" id="GO:0031490">
    <property type="term" value="F:chromatin DNA binding"/>
    <property type="evidence" value="ECO:0000314"/>
    <property type="project" value="TAIR"/>
</dbReference>
<dbReference type="GO" id="GO:0003700">
    <property type="term" value="F:DNA-binding transcription factor activity"/>
    <property type="evidence" value="ECO:0000250"/>
    <property type="project" value="TAIR"/>
</dbReference>
<dbReference type="GO" id="GO:0000976">
    <property type="term" value="F:transcription cis-regulatory region binding"/>
    <property type="evidence" value="ECO:0000353"/>
    <property type="project" value="TAIR"/>
</dbReference>
<dbReference type="CDD" id="cd14703">
    <property type="entry name" value="bZIP_plant_RF2"/>
    <property type="match status" value="1"/>
</dbReference>
<dbReference type="FunFam" id="1.20.5.170:FF:000009">
    <property type="entry name" value="probable transcription factor PosF21"/>
    <property type="match status" value="1"/>
</dbReference>
<dbReference type="Gene3D" id="1.20.5.170">
    <property type="match status" value="1"/>
</dbReference>
<dbReference type="InterPro" id="IPR004827">
    <property type="entry name" value="bZIP"/>
</dbReference>
<dbReference type="InterPro" id="IPR044759">
    <property type="entry name" value="bZIP_RF2"/>
</dbReference>
<dbReference type="InterPro" id="IPR046347">
    <property type="entry name" value="bZIP_sf"/>
</dbReference>
<dbReference type="PANTHER" id="PTHR13690:SF103">
    <property type="entry name" value="BZIP TRANSCRIPTION FACTOR 18"/>
    <property type="match status" value="1"/>
</dbReference>
<dbReference type="PANTHER" id="PTHR13690">
    <property type="entry name" value="TRANSCRIPTION FACTOR POSF21-RELATED"/>
    <property type="match status" value="1"/>
</dbReference>
<dbReference type="Pfam" id="PF00170">
    <property type="entry name" value="bZIP_1"/>
    <property type="match status" value="1"/>
</dbReference>
<dbReference type="SMART" id="SM00338">
    <property type="entry name" value="BRLZ"/>
    <property type="match status" value="1"/>
</dbReference>
<dbReference type="SUPFAM" id="SSF57959">
    <property type="entry name" value="Leucine zipper domain"/>
    <property type="match status" value="1"/>
</dbReference>
<dbReference type="PROSITE" id="PS50217">
    <property type="entry name" value="BZIP"/>
    <property type="match status" value="1"/>
</dbReference>
<feature type="chain" id="PRO_0000441690" description="bZIP transcription factor 18">
    <location>
        <begin position="1"/>
        <end position="367"/>
    </location>
</feature>
<feature type="domain" description="bZIP" evidence="3">
    <location>
        <begin position="148"/>
        <end position="211"/>
    </location>
</feature>
<feature type="region of interest" description="Disordered" evidence="4">
    <location>
        <begin position="1"/>
        <end position="57"/>
    </location>
</feature>
<feature type="region of interest" description="Disordered" evidence="4">
    <location>
        <begin position="79"/>
        <end position="124"/>
    </location>
</feature>
<feature type="region of interest" description="Basic motif" evidence="3">
    <location>
        <begin position="150"/>
        <end position="171"/>
    </location>
</feature>
<feature type="region of interest" description="Leucine-zipper" evidence="3">
    <location>
        <begin position="176"/>
        <end position="190"/>
    </location>
</feature>
<feature type="region of interest" description="Disordered" evidence="4">
    <location>
        <begin position="294"/>
        <end position="330"/>
    </location>
</feature>
<feature type="region of interest" description="Disordered" evidence="4">
    <location>
        <begin position="343"/>
        <end position="367"/>
    </location>
</feature>
<feature type="coiled-coil region" evidence="2">
    <location>
        <begin position="166"/>
        <end position="245"/>
    </location>
</feature>
<feature type="compositionally biased region" description="Basic and acidic residues" evidence="4">
    <location>
        <begin position="38"/>
        <end position="47"/>
    </location>
</feature>
<feature type="compositionally biased region" description="Low complexity" evidence="4">
    <location>
        <begin position="82"/>
        <end position="96"/>
    </location>
</feature>
<feature type="compositionally biased region" description="Polar residues" evidence="4">
    <location>
        <begin position="294"/>
        <end position="309"/>
    </location>
</feature>
<feature type="compositionally biased region" description="Polar residues" evidence="4">
    <location>
        <begin position="317"/>
        <end position="328"/>
    </location>
</feature>
<feature type="compositionally biased region" description="Polar residues" evidence="4">
    <location>
        <begin position="354"/>
        <end position="367"/>
    </location>
</feature>
<feature type="modified residue" description="Phosphoserine" evidence="1">
    <location>
        <position position="70"/>
    </location>
</feature>
<feature type="sequence conflict" description="In Ref. 1; CAB06697." evidence="8" ref="1">
    <original>P</original>
    <variation>S</variation>
    <location>
        <position position="7"/>
    </location>
</feature>
<sequence>MEDPSNPQPNQSNLSQCPPLATAPTPAPVRGPYHRRAHSEVQFRLPEDLDLSEPFGGFDELGSEDDLFCSYMDIEKLGSGSGSASDSAGPSAPRSDNPFSAENGGAEAGNSRPRHRHSLSVDGSSTLESIEAKKAMAPDKLAELWVVDPKRAKRIIANRQSAARSKERKARYILELERKVQTLQTEATTLSAQLSLFQRDTTGLSSENTELKLRLQVMEQQAKLRDALNEQLKKEVERLKFATGEVSPADAYNLGMAHMQYQQQPQQSFFQHHHQQQTDAQNLQQMTHQFHLFQPNNNQNQSSRTNPPTAHQLMHHATSNAPAQSHSYSEAMHEDHLGRLQGLDISSCGRGSNFGRSDTVSESSSTM</sequence>
<name>BZP18_ARATH</name>
<evidence type="ECO:0000250" key="1">
    <source>
        <dbReference type="UniProtKB" id="Q9MA75"/>
    </source>
</evidence>
<evidence type="ECO:0000255" key="2"/>
<evidence type="ECO:0000255" key="3">
    <source>
        <dbReference type="PROSITE-ProRule" id="PRU00978"/>
    </source>
</evidence>
<evidence type="ECO:0000256" key="4">
    <source>
        <dbReference type="SAM" id="MobiDB-lite"/>
    </source>
</evidence>
<evidence type="ECO:0000269" key="5">
    <source>
    </source>
</evidence>
<evidence type="ECO:0000269" key="6">
    <source>
    </source>
</evidence>
<evidence type="ECO:0000303" key="7">
    <source>
    </source>
</evidence>
<evidence type="ECO:0000305" key="8"/>
<evidence type="ECO:0000312" key="9">
    <source>
        <dbReference type="Araport" id="AT2G40620"/>
    </source>
</evidence>
<evidence type="ECO:0000312" key="10">
    <source>
        <dbReference type="EMBL" id="AAB87576.1"/>
    </source>
</evidence>
<evidence type="ECO:0000312" key="11">
    <source>
        <dbReference type="EMBL" id="CAB06697.1"/>
    </source>
</evidence>
<protein>
    <recommendedName>
        <fullName evidence="8">bZIP transcription factor 18</fullName>
        <shortName evidence="7">AtbZIP18</shortName>
        <shortName evidence="8">bZIP protein 18</shortName>
    </recommendedName>
</protein>
<comment type="function">
    <text evidence="6">Transcription factor that may participate with bZIP34 in the gametophytic control of pollen development.</text>
</comment>
<comment type="subunit">
    <text evidence="5 6">Interacts with NEAP1 (PubMed:27630107). Forms homodimer and heterodimer with bZIP34 and bZIP61 (PubMed:27896439).</text>
</comment>
<comment type="interaction">
    <interactant intactId="EBI-4438646">
        <id>O22873</id>
    </interactant>
    <interactant intactId="EBI-307576">
        <id>Q9LZW4</id>
        <label>CIPK14</label>
    </interactant>
    <organismsDiffer>false</organismsDiffer>
    <experiments>3</experiments>
</comment>
<comment type="subcellular location">
    <subcellularLocation>
        <location evidence="3">Nucleus</location>
    </subcellularLocation>
    <subcellularLocation>
        <location evidence="6">Nucleus</location>
        <location evidence="6">Nucleoplasm</location>
    </subcellularLocation>
    <subcellularLocation>
        <location evidence="6">Cytoplasm</location>
        <location evidence="6">Perinuclear region</location>
    </subcellularLocation>
    <subcellularLocation>
        <location evidence="6">Cytoplasm</location>
    </subcellularLocation>
</comment>
<comment type="tissue specificity">
    <text evidence="6">Ubiquitous. Strongly expressed in mature pollen.</text>
</comment>
<comment type="disruption phenotype">
    <text evidence="6">Pollen morphological defects.</text>
</comment>
<reference key="1">
    <citation type="journal article" date="1997" name="Proc. Natl. Acad. Sci. U.S.A.">
        <title>Efficient gene tagging in Arabidopsis thaliana using a gene trap approach.</title>
        <authorList>
            <person name="Babiychuk E."/>
            <person name="Fuangthong M."/>
            <person name="Van Montagu M."/>
            <person name="Inze D."/>
            <person name="Kushnir S."/>
        </authorList>
    </citation>
    <scope>NUCLEOTIDE SEQUENCE [MRNA]</scope>
    <source>
        <strain>cv. Columbia</strain>
        <tissue evidence="11">Leaf</tissue>
    </source>
</reference>
<reference key="2">
    <citation type="journal article" date="1999" name="Nature">
        <title>Sequence and analysis of chromosome 2 of the plant Arabidopsis thaliana.</title>
        <authorList>
            <person name="Lin X."/>
            <person name="Kaul S."/>
            <person name="Rounsley S.D."/>
            <person name="Shea T.P."/>
            <person name="Benito M.-I."/>
            <person name="Town C.D."/>
            <person name="Fujii C.Y."/>
            <person name="Mason T.M."/>
            <person name="Bowman C.L."/>
            <person name="Barnstead M.E."/>
            <person name="Feldblyum T.V."/>
            <person name="Buell C.R."/>
            <person name="Ketchum K.A."/>
            <person name="Lee J.J."/>
            <person name="Ronning C.M."/>
            <person name="Koo H.L."/>
            <person name="Moffat K.S."/>
            <person name="Cronin L.A."/>
            <person name="Shen M."/>
            <person name="Pai G."/>
            <person name="Van Aken S."/>
            <person name="Umayam L."/>
            <person name="Tallon L.J."/>
            <person name="Gill J.E."/>
            <person name="Adams M.D."/>
            <person name="Carrera A.J."/>
            <person name="Creasy T.H."/>
            <person name="Goodman H.M."/>
            <person name="Somerville C.R."/>
            <person name="Copenhaver G.P."/>
            <person name="Preuss D."/>
            <person name="Nierman W.C."/>
            <person name="White O."/>
            <person name="Eisen J.A."/>
            <person name="Salzberg S.L."/>
            <person name="Fraser C.M."/>
            <person name="Venter J.C."/>
        </authorList>
    </citation>
    <scope>NUCLEOTIDE SEQUENCE [LARGE SCALE GENOMIC DNA]</scope>
    <source>
        <strain>cv. Columbia</strain>
    </source>
</reference>
<reference key="3">
    <citation type="journal article" date="2017" name="Plant J.">
        <title>Araport11: a complete reannotation of the Arabidopsis thaliana reference genome.</title>
        <authorList>
            <person name="Cheng C.Y."/>
            <person name="Krishnakumar V."/>
            <person name="Chan A.P."/>
            <person name="Thibaud-Nissen F."/>
            <person name="Schobel S."/>
            <person name="Town C.D."/>
        </authorList>
    </citation>
    <scope>GENOME REANNOTATION</scope>
    <source>
        <strain>cv. Columbia</strain>
    </source>
</reference>
<reference key="4">
    <citation type="journal article" date="2003" name="Science">
        <title>Empirical analysis of transcriptional activity in the Arabidopsis genome.</title>
        <authorList>
            <person name="Yamada K."/>
            <person name="Lim J."/>
            <person name="Dale J.M."/>
            <person name="Chen H."/>
            <person name="Shinn P."/>
            <person name="Palm C.J."/>
            <person name="Southwick A.M."/>
            <person name="Wu H.C."/>
            <person name="Kim C.J."/>
            <person name="Nguyen M."/>
            <person name="Pham P.K."/>
            <person name="Cheuk R.F."/>
            <person name="Karlin-Newmann G."/>
            <person name="Liu S.X."/>
            <person name="Lam B."/>
            <person name="Sakano H."/>
            <person name="Wu T."/>
            <person name="Yu G."/>
            <person name="Miranda M."/>
            <person name="Quach H.L."/>
            <person name="Tripp M."/>
            <person name="Chang C.H."/>
            <person name="Lee J.M."/>
            <person name="Toriumi M.J."/>
            <person name="Chan M.M."/>
            <person name="Tang C.C."/>
            <person name="Onodera C.S."/>
            <person name="Deng J.M."/>
            <person name="Akiyama K."/>
            <person name="Ansari Y."/>
            <person name="Arakawa T."/>
            <person name="Banh J."/>
            <person name="Banno F."/>
            <person name="Bowser L."/>
            <person name="Brooks S.Y."/>
            <person name="Carninci P."/>
            <person name="Chao Q."/>
            <person name="Choy N."/>
            <person name="Enju A."/>
            <person name="Goldsmith A.D."/>
            <person name="Gurjal M."/>
            <person name="Hansen N.F."/>
            <person name="Hayashizaki Y."/>
            <person name="Johnson-Hopson C."/>
            <person name="Hsuan V.W."/>
            <person name="Iida K."/>
            <person name="Karnes M."/>
            <person name="Khan S."/>
            <person name="Koesema E."/>
            <person name="Ishida J."/>
            <person name="Jiang P.X."/>
            <person name="Jones T."/>
            <person name="Kawai J."/>
            <person name="Kamiya A."/>
            <person name="Meyers C."/>
            <person name="Nakajima M."/>
            <person name="Narusaka M."/>
            <person name="Seki M."/>
            <person name="Sakurai T."/>
            <person name="Satou M."/>
            <person name="Tamse R."/>
            <person name="Vaysberg M."/>
            <person name="Wallender E.K."/>
            <person name="Wong C."/>
            <person name="Yamamura Y."/>
            <person name="Yuan S."/>
            <person name="Shinozaki K."/>
            <person name="Davis R.W."/>
            <person name="Theologis A."/>
            <person name="Ecker J.R."/>
        </authorList>
    </citation>
    <scope>NUCLEOTIDE SEQUENCE [LARGE SCALE MRNA]</scope>
    <source>
        <strain>cv. Columbia</strain>
    </source>
</reference>
<reference key="5">
    <citation type="journal article" date="2002" name="Trends Plant Sci.">
        <title>bZIP transcription factors in Arabidopsis.</title>
        <authorList>
            <person name="Jakoby M."/>
            <person name="Weisshaar B."/>
            <person name="Droege-Laser W."/>
            <person name="Vicente-Carbajosa J."/>
            <person name="Tiedemann J."/>
            <person name="Kroj T."/>
            <person name="Parcy F."/>
        </authorList>
    </citation>
    <scope>GENE FAMILY</scope>
    <scope>NOMENCLATURE</scope>
</reference>
<reference key="6">
    <citation type="journal article" date="2016" name="J. Exp. Bot.">
        <title>A novel family of plant nuclear envelope-associated proteins.</title>
        <authorList>
            <person name="Pawar V."/>
            <person name="Poulet A."/>
            <person name="Detourne G."/>
            <person name="Tatout C."/>
            <person name="Vanrobays E."/>
            <person name="Evans D.E."/>
            <person name="Graumann K."/>
        </authorList>
    </citation>
    <scope>INTERACTION WITH NEAP1</scope>
</reference>
<reference key="7">
    <citation type="journal article" date="2017" name="Plant Reprod.">
        <title>Characterization of pollen-expressed bZIP protein interactions and the role of ATbZIP18 in the male gametophyte.</title>
        <authorList>
            <person name="Gibalova A."/>
            <person name="Steinbachova L."/>
            <person name="Hafidh S."/>
            <person name="Blahova V."/>
            <person name="Gadiou Z."/>
            <person name="Michailidis C."/>
            <person name="Muller K."/>
            <person name="Pleskot R."/>
            <person name="Duplakova N."/>
            <person name="Honys D."/>
        </authorList>
    </citation>
    <scope>SUBUNIT</scope>
    <scope>TISSUE SPECIFICITY</scope>
    <scope>INTERACTION WITH BZIP34 AND BZIP61</scope>
    <scope>DISRUPTION PHENOTYPE</scope>
    <scope>SUBCELLULAR LOCATION</scope>
    <scope>FUNCTION</scope>
</reference>
<organism>
    <name type="scientific">Arabidopsis thaliana</name>
    <name type="common">Mouse-ear cress</name>
    <dbReference type="NCBI Taxonomy" id="3702"/>
    <lineage>
        <taxon>Eukaryota</taxon>
        <taxon>Viridiplantae</taxon>
        <taxon>Streptophyta</taxon>
        <taxon>Embryophyta</taxon>
        <taxon>Tracheophyta</taxon>
        <taxon>Spermatophyta</taxon>
        <taxon>Magnoliopsida</taxon>
        <taxon>eudicotyledons</taxon>
        <taxon>Gunneridae</taxon>
        <taxon>Pentapetalae</taxon>
        <taxon>rosids</taxon>
        <taxon>malvids</taxon>
        <taxon>Brassicales</taxon>
        <taxon>Brassicaceae</taxon>
        <taxon>Camelineae</taxon>
        <taxon>Arabidopsis</taxon>
    </lineage>
</organism>
<gene>
    <name evidence="7" type="primary">BZIP18</name>
    <name evidence="9" type="ordered locus">At2g40620</name>
    <name evidence="10" type="ORF">T2P4.3</name>
</gene>